<organism>
    <name type="scientific">Rickettsia bellii (strain OSU 85-389)</name>
    <dbReference type="NCBI Taxonomy" id="391896"/>
    <lineage>
        <taxon>Bacteria</taxon>
        <taxon>Pseudomonadati</taxon>
        <taxon>Pseudomonadota</taxon>
        <taxon>Alphaproteobacteria</taxon>
        <taxon>Rickettsiales</taxon>
        <taxon>Rickettsiaceae</taxon>
        <taxon>Rickettsieae</taxon>
        <taxon>Rickettsia</taxon>
        <taxon>belli group</taxon>
    </lineage>
</organism>
<proteinExistence type="inferred from homology"/>
<protein>
    <recommendedName>
        <fullName evidence="1">4-hydroxy-tetrahydrodipicolinate synthase</fullName>
        <shortName evidence="1">HTPA synthase</shortName>
        <ecNumber evidence="1">4.3.3.7</ecNumber>
    </recommendedName>
</protein>
<dbReference type="EC" id="4.3.3.7" evidence="1"/>
<dbReference type="EMBL" id="CP000849">
    <property type="protein sequence ID" value="ABV79298.1"/>
    <property type="molecule type" value="Genomic_DNA"/>
</dbReference>
<dbReference type="RefSeq" id="WP_012151958.1">
    <property type="nucleotide sequence ID" value="NC_009883.1"/>
</dbReference>
<dbReference type="SMR" id="A8GWS1"/>
<dbReference type="KEGG" id="rbo:A1I_04805"/>
<dbReference type="HOGENOM" id="CLU_049343_7_1_5"/>
<dbReference type="UniPathway" id="UPA00034">
    <property type="reaction ID" value="UER00017"/>
</dbReference>
<dbReference type="GO" id="GO:0005737">
    <property type="term" value="C:cytoplasm"/>
    <property type="evidence" value="ECO:0007669"/>
    <property type="project" value="UniProtKB-SubCell"/>
</dbReference>
<dbReference type="GO" id="GO:0008700">
    <property type="term" value="F:(R,S)-4-hydroxy-2-oxoglutarate aldolase activity"/>
    <property type="evidence" value="ECO:0007669"/>
    <property type="project" value="TreeGrafter"/>
</dbReference>
<dbReference type="GO" id="GO:0008840">
    <property type="term" value="F:4-hydroxy-tetrahydrodipicolinate synthase activity"/>
    <property type="evidence" value="ECO:0007669"/>
    <property type="project" value="UniProtKB-UniRule"/>
</dbReference>
<dbReference type="GO" id="GO:0019877">
    <property type="term" value="P:diaminopimelate biosynthetic process"/>
    <property type="evidence" value="ECO:0007669"/>
    <property type="project" value="UniProtKB-UniRule"/>
</dbReference>
<dbReference type="GO" id="GO:0009436">
    <property type="term" value="P:glyoxylate catabolic process"/>
    <property type="evidence" value="ECO:0007669"/>
    <property type="project" value="TreeGrafter"/>
</dbReference>
<dbReference type="GO" id="GO:0009089">
    <property type="term" value="P:lysine biosynthetic process via diaminopimelate"/>
    <property type="evidence" value="ECO:0007669"/>
    <property type="project" value="UniProtKB-UniRule"/>
</dbReference>
<dbReference type="CDD" id="cd00950">
    <property type="entry name" value="DHDPS"/>
    <property type="match status" value="1"/>
</dbReference>
<dbReference type="Gene3D" id="3.20.20.70">
    <property type="entry name" value="Aldolase class I"/>
    <property type="match status" value="1"/>
</dbReference>
<dbReference type="HAMAP" id="MF_00418">
    <property type="entry name" value="DapA"/>
    <property type="match status" value="1"/>
</dbReference>
<dbReference type="InterPro" id="IPR013785">
    <property type="entry name" value="Aldolase_TIM"/>
</dbReference>
<dbReference type="InterPro" id="IPR005263">
    <property type="entry name" value="DapA"/>
</dbReference>
<dbReference type="InterPro" id="IPR002220">
    <property type="entry name" value="DapA-like"/>
</dbReference>
<dbReference type="InterPro" id="IPR020625">
    <property type="entry name" value="Schiff_base-form_aldolases_AS"/>
</dbReference>
<dbReference type="InterPro" id="IPR020624">
    <property type="entry name" value="Schiff_base-form_aldolases_CS"/>
</dbReference>
<dbReference type="NCBIfam" id="TIGR00674">
    <property type="entry name" value="dapA"/>
    <property type="match status" value="1"/>
</dbReference>
<dbReference type="PANTHER" id="PTHR12128:SF66">
    <property type="entry name" value="4-HYDROXY-2-OXOGLUTARATE ALDOLASE, MITOCHONDRIAL"/>
    <property type="match status" value="1"/>
</dbReference>
<dbReference type="PANTHER" id="PTHR12128">
    <property type="entry name" value="DIHYDRODIPICOLINATE SYNTHASE"/>
    <property type="match status" value="1"/>
</dbReference>
<dbReference type="Pfam" id="PF00701">
    <property type="entry name" value="DHDPS"/>
    <property type="match status" value="1"/>
</dbReference>
<dbReference type="PIRSF" id="PIRSF001365">
    <property type="entry name" value="DHDPS"/>
    <property type="match status" value="1"/>
</dbReference>
<dbReference type="PRINTS" id="PR00146">
    <property type="entry name" value="DHPICSNTHASE"/>
</dbReference>
<dbReference type="SMART" id="SM01130">
    <property type="entry name" value="DHDPS"/>
    <property type="match status" value="1"/>
</dbReference>
<dbReference type="SUPFAM" id="SSF51569">
    <property type="entry name" value="Aldolase"/>
    <property type="match status" value="1"/>
</dbReference>
<dbReference type="PROSITE" id="PS00665">
    <property type="entry name" value="DHDPS_1"/>
    <property type="match status" value="1"/>
</dbReference>
<dbReference type="PROSITE" id="PS00666">
    <property type="entry name" value="DHDPS_2"/>
    <property type="match status" value="1"/>
</dbReference>
<comment type="function">
    <text evidence="1">Catalyzes the condensation of (S)-aspartate-beta-semialdehyde [(S)-ASA] and pyruvate to 4-hydroxy-tetrahydrodipicolinate (HTPA).</text>
</comment>
<comment type="catalytic activity">
    <reaction evidence="1">
        <text>L-aspartate 4-semialdehyde + pyruvate = (2S,4S)-4-hydroxy-2,3,4,5-tetrahydrodipicolinate + H2O + H(+)</text>
        <dbReference type="Rhea" id="RHEA:34171"/>
        <dbReference type="ChEBI" id="CHEBI:15361"/>
        <dbReference type="ChEBI" id="CHEBI:15377"/>
        <dbReference type="ChEBI" id="CHEBI:15378"/>
        <dbReference type="ChEBI" id="CHEBI:67139"/>
        <dbReference type="ChEBI" id="CHEBI:537519"/>
        <dbReference type="EC" id="4.3.3.7"/>
    </reaction>
</comment>
<comment type="pathway">
    <text evidence="1">Amino-acid biosynthesis; L-lysine biosynthesis via DAP pathway; (S)-tetrahydrodipicolinate from L-aspartate: step 3/4.</text>
</comment>
<comment type="subunit">
    <text evidence="1">Homotetramer; dimer of dimers.</text>
</comment>
<comment type="subcellular location">
    <subcellularLocation>
        <location evidence="1">Cytoplasm</location>
    </subcellularLocation>
</comment>
<comment type="similarity">
    <text evidence="1">Belongs to the DapA family.</text>
</comment>
<comment type="caution">
    <text evidence="2">Was originally thought to be a dihydrodipicolinate synthase (DHDPS), catalyzing the condensation of (S)-aspartate-beta-semialdehyde [(S)-ASA] and pyruvate to dihydrodipicolinate (DHDP). However, it was shown in E.coli that the product of the enzymatic reaction is not dihydrodipicolinate but in fact (4S)-4-hydroxy-2,3,4,5-tetrahydro-(2S)-dipicolinic acid (HTPA), and that the consecutive dehydration reaction leading to DHDP is not spontaneous but catalyzed by DapB.</text>
</comment>
<sequence length="294" mass="32273">MNNIFKGLITAIITPFRDNKLDLNALEKILEYQINAEVNAVVIAGSTGEGSSLSFEEYKLLLQTAKDIVNKRIPVISGCSSNNTACAIELAAESTKIGVDGFMISPPSYLKPTQGGIYKHFEAIHEASNLPIMLYSVPSRTGVDFTDETILKLSKLSRILALKDAGIDLERPLRIKSVINKELNLLCGNDDLSLAFNAQGGVGCVSVASNITPKLCKELQEKWHNNDVKGALGIHQRLLPLYKALFVESNPIPVKYAMYYLGFCTNEIRLPLTEATDTTKKQIEEIITSLSIKV</sequence>
<accession>A8GWS1</accession>
<feature type="chain" id="PRO_1000050256" description="4-hydroxy-tetrahydrodipicolinate synthase">
    <location>
        <begin position="1"/>
        <end position="294"/>
    </location>
</feature>
<feature type="active site" description="Proton donor/acceptor" evidence="1">
    <location>
        <position position="135"/>
    </location>
</feature>
<feature type="active site" description="Schiff-base intermediate with substrate" evidence="1">
    <location>
        <position position="163"/>
    </location>
</feature>
<feature type="binding site" evidence="1">
    <location>
        <position position="47"/>
    </location>
    <ligand>
        <name>pyruvate</name>
        <dbReference type="ChEBI" id="CHEBI:15361"/>
    </ligand>
</feature>
<feature type="binding site" evidence="1">
    <location>
        <position position="205"/>
    </location>
    <ligand>
        <name>pyruvate</name>
        <dbReference type="ChEBI" id="CHEBI:15361"/>
    </ligand>
</feature>
<feature type="site" description="Part of a proton relay during catalysis" evidence="1">
    <location>
        <position position="46"/>
    </location>
</feature>
<feature type="site" description="Part of a proton relay during catalysis" evidence="1">
    <location>
        <position position="109"/>
    </location>
</feature>
<name>DAPA_RICB8</name>
<gene>
    <name evidence="1" type="primary">dapA</name>
    <name type="ordered locus">A1I_04805</name>
</gene>
<evidence type="ECO:0000255" key="1">
    <source>
        <dbReference type="HAMAP-Rule" id="MF_00418"/>
    </source>
</evidence>
<evidence type="ECO:0000305" key="2"/>
<reference key="1">
    <citation type="submission" date="2007-09" db="EMBL/GenBank/DDBJ databases">
        <title>Complete genome sequencing of Rickettsia bellii.</title>
        <authorList>
            <person name="Madan A."/>
            <person name="Lee H."/>
            <person name="Madan A."/>
            <person name="Yoon J.-G."/>
            <person name="Ryu G.-Y."/>
            <person name="Dasch G."/>
            <person name="Ereemeva M."/>
        </authorList>
    </citation>
    <scope>NUCLEOTIDE SEQUENCE [LARGE SCALE GENOMIC DNA]</scope>
    <source>
        <strain>OSU 85-389</strain>
    </source>
</reference>
<keyword id="KW-0028">Amino-acid biosynthesis</keyword>
<keyword id="KW-0963">Cytoplasm</keyword>
<keyword id="KW-0220">Diaminopimelate biosynthesis</keyword>
<keyword id="KW-0456">Lyase</keyword>
<keyword id="KW-0457">Lysine biosynthesis</keyword>
<keyword id="KW-0704">Schiff base</keyword>